<name>DXR_RUEPO</name>
<gene>
    <name evidence="1" type="primary">dxr</name>
    <name type="ordered locus">SPO1667</name>
</gene>
<feature type="chain" id="PRO_0000163713" description="1-deoxy-D-xylulose 5-phosphate reductoisomerase">
    <location>
        <begin position="1"/>
        <end position="395"/>
    </location>
</feature>
<feature type="binding site" evidence="1">
    <location>
        <position position="15"/>
    </location>
    <ligand>
        <name>NADPH</name>
        <dbReference type="ChEBI" id="CHEBI:57783"/>
    </ligand>
</feature>
<feature type="binding site" evidence="1">
    <location>
        <position position="16"/>
    </location>
    <ligand>
        <name>NADPH</name>
        <dbReference type="ChEBI" id="CHEBI:57783"/>
    </ligand>
</feature>
<feature type="binding site" evidence="1">
    <location>
        <position position="17"/>
    </location>
    <ligand>
        <name>NADPH</name>
        <dbReference type="ChEBI" id="CHEBI:57783"/>
    </ligand>
</feature>
<feature type="binding site" evidence="1">
    <location>
        <position position="18"/>
    </location>
    <ligand>
        <name>NADPH</name>
        <dbReference type="ChEBI" id="CHEBI:57783"/>
    </ligand>
</feature>
<feature type="binding site" evidence="1">
    <location>
        <position position="41"/>
    </location>
    <ligand>
        <name>NADPH</name>
        <dbReference type="ChEBI" id="CHEBI:57783"/>
    </ligand>
</feature>
<feature type="binding site" evidence="1">
    <location>
        <position position="43"/>
    </location>
    <ligand>
        <name>NADPH</name>
        <dbReference type="ChEBI" id="CHEBI:57783"/>
    </ligand>
</feature>
<feature type="binding site" evidence="1">
    <location>
        <position position="126"/>
    </location>
    <ligand>
        <name>NADPH</name>
        <dbReference type="ChEBI" id="CHEBI:57783"/>
    </ligand>
</feature>
<feature type="binding site" evidence="1">
    <location>
        <position position="127"/>
    </location>
    <ligand>
        <name>1-deoxy-D-xylulose 5-phosphate</name>
        <dbReference type="ChEBI" id="CHEBI:57792"/>
    </ligand>
</feature>
<feature type="binding site" evidence="1">
    <location>
        <position position="128"/>
    </location>
    <ligand>
        <name>NADPH</name>
        <dbReference type="ChEBI" id="CHEBI:57783"/>
    </ligand>
</feature>
<feature type="binding site" evidence="1">
    <location>
        <position position="152"/>
    </location>
    <ligand>
        <name>Mn(2+)</name>
        <dbReference type="ChEBI" id="CHEBI:29035"/>
    </ligand>
</feature>
<feature type="binding site" evidence="1">
    <location>
        <position position="153"/>
    </location>
    <ligand>
        <name>1-deoxy-D-xylulose 5-phosphate</name>
        <dbReference type="ChEBI" id="CHEBI:57792"/>
    </ligand>
</feature>
<feature type="binding site" evidence="1">
    <location>
        <position position="154"/>
    </location>
    <ligand>
        <name>1-deoxy-D-xylulose 5-phosphate</name>
        <dbReference type="ChEBI" id="CHEBI:57792"/>
    </ligand>
</feature>
<feature type="binding site" evidence="1">
    <location>
        <position position="154"/>
    </location>
    <ligand>
        <name>Mn(2+)</name>
        <dbReference type="ChEBI" id="CHEBI:29035"/>
    </ligand>
</feature>
<feature type="binding site" evidence="1">
    <location>
        <position position="178"/>
    </location>
    <ligand>
        <name>1-deoxy-D-xylulose 5-phosphate</name>
        <dbReference type="ChEBI" id="CHEBI:57792"/>
    </ligand>
</feature>
<feature type="binding site" evidence="1">
    <location>
        <position position="201"/>
    </location>
    <ligand>
        <name>1-deoxy-D-xylulose 5-phosphate</name>
        <dbReference type="ChEBI" id="CHEBI:57792"/>
    </ligand>
</feature>
<feature type="binding site" evidence="1">
    <location>
        <position position="207"/>
    </location>
    <ligand>
        <name>NADPH</name>
        <dbReference type="ChEBI" id="CHEBI:57783"/>
    </ligand>
</feature>
<feature type="binding site" evidence="1">
    <location>
        <position position="214"/>
    </location>
    <ligand>
        <name>1-deoxy-D-xylulose 5-phosphate</name>
        <dbReference type="ChEBI" id="CHEBI:57792"/>
    </ligand>
</feature>
<feature type="binding site" evidence="1">
    <location>
        <position position="219"/>
    </location>
    <ligand>
        <name>1-deoxy-D-xylulose 5-phosphate</name>
        <dbReference type="ChEBI" id="CHEBI:57792"/>
    </ligand>
</feature>
<feature type="binding site" evidence="1">
    <location>
        <position position="220"/>
    </location>
    <ligand>
        <name>1-deoxy-D-xylulose 5-phosphate</name>
        <dbReference type="ChEBI" id="CHEBI:57792"/>
    </ligand>
</feature>
<feature type="binding site" evidence="1">
    <location>
        <position position="223"/>
    </location>
    <ligand>
        <name>1-deoxy-D-xylulose 5-phosphate</name>
        <dbReference type="ChEBI" id="CHEBI:57792"/>
    </ligand>
</feature>
<feature type="binding site" evidence="1">
    <location>
        <position position="223"/>
    </location>
    <ligand>
        <name>Mn(2+)</name>
        <dbReference type="ChEBI" id="CHEBI:29035"/>
    </ligand>
</feature>
<evidence type="ECO:0000255" key="1">
    <source>
        <dbReference type="HAMAP-Rule" id="MF_00183"/>
    </source>
</evidence>
<comment type="function">
    <text evidence="1">Catalyzes the NADPH-dependent rearrangement and reduction of 1-deoxy-D-xylulose-5-phosphate (DXP) to 2-C-methyl-D-erythritol 4-phosphate (MEP).</text>
</comment>
<comment type="catalytic activity">
    <reaction evidence="1">
        <text>2-C-methyl-D-erythritol 4-phosphate + NADP(+) = 1-deoxy-D-xylulose 5-phosphate + NADPH + H(+)</text>
        <dbReference type="Rhea" id="RHEA:13717"/>
        <dbReference type="ChEBI" id="CHEBI:15378"/>
        <dbReference type="ChEBI" id="CHEBI:57783"/>
        <dbReference type="ChEBI" id="CHEBI:57792"/>
        <dbReference type="ChEBI" id="CHEBI:58262"/>
        <dbReference type="ChEBI" id="CHEBI:58349"/>
        <dbReference type="EC" id="1.1.1.267"/>
    </reaction>
    <physiologicalReaction direction="right-to-left" evidence="1">
        <dbReference type="Rhea" id="RHEA:13719"/>
    </physiologicalReaction>
</comment>
<comment type="cofactor">
    <cofactor evidence="1">
        <name>Mg(2+)</name>
        <dbReference type="ChEBI" id="CHEBI:18420"/>
    </cofactor>
    <cofactor evidence="1">
        <name>Mn(2+)</name>
        <dbReference type="ChEBI" id="CHEBI:29035"/>
    </cofactor>
</comment>
<comment type="pathway">
    <text evidence="1">Isoprenoid biosynthesis; isopentenyl diphosphate biosynthesis via DXP pathway; isopentenyl diphosphate from 1-deoxy-D-xylulose 5-phosphate: step 1/6.</text>
</comment>
<comment type="similarity">
    <text evidence="1">Belongs to the DXR family.</text>
</comment>
<protein>
    <recommendedName>
        <fullName evidence="1">1-deoxy-D-xylulose 5-phosphate reductoisomerase</fullName>
        <shortName evidence="1">DXP reductoisomerase</shortName>
        <ecNumber evidence="1">1.1.1.267</ecNumber>
    </recommendedName>
    <alternativeName>
        <fullName evidence="1">1-deoxyxylulose-5-phosphate reductoisomerase</fullName>
    </alternativeName>
    <alternativeName>
        <fullName evidence="1">2-C-methyl-D-erythritol 4-phosphate synthase</fullName>
    </alternativeName>
</protein>
<reference key="1">
    <citation type="journal article" date="2004" name="Nature">
        <title>Genome sequence of Silicibacter pomeroyi reveals adaptations to the marine environment.</title>
        <authorList>
            <person name="Moran M.A."/>
            <person name="Buchan A."/>
            <person name="Gonzalez J.M."/>
            <person name="Heidelberg J.F."/>
            <person name="Whitman W.B."/>
            <person name="Kiene R.P."/>
            <person name="Henriksen J.R."/>
            <person name="King G.M."/>
            <person name="Belas R."/>
            <person name="Fuqua C."/>
            <person name="Brinkac L.M."/>
            <person name="Lewis M."/>
            <person name="Johri S."/>
            <person name="Weaver B."/>
            <person name="Pai G."/>
            <person name="Eisen J.A."/>
            <person name="Rahe E."/>
            <person name="Sheldon W.M."/>
            <person name="Ye W."/>
            <person name="Miller T.R."/>
            <person name="Carlton J."/>
            <person name="Rasko D.A."/>
            <person name="Paulsen I.T."/>
            <person name="Ren Q."/>
            <person name="Daugherty S.C."/>
            <person name="DeBoy R.T."/>
            <person name="Dodson R.J."/>
            <person name="Durkin A.S."/>
            <person name="Madupu R."/>
            <person name="Nelson W.C."/>
            <person name="Sullivan S.A."/>
            <person name="Rosovitz M.J."/>
            <person name="Haft D.H."/>
            <person name="Selengut J."/>
            <person name="Ward N."/>
        </authorList>
    </citation>
    <scope>NUCLEOTIDE SEQUENCE [LARGE SCALE GENOMIC DNA]</scope>
    <source>
        <strain>ATCC 700808 / DSM 15171 / DSS-3</strain>
    </source>
</reference>
<reference key="2">
    <citation type="journal article" date="2014" name="Stand. Genomic Sci.">
        <title>An updated genome annotation for the model marine bacterium Ruegeria pomeroyi DSS-3.</title>
        <authorList>
            <person name="Rivers A.R."/>
            <person name="Smith C.B."/>
            <person name="Moran M.A."/>
        </authorList>
    </citation>
    <scope>GENOME REANNOTATION</scope>
    <source>
        <strain>ATCC 700808 / DSM 15171 / DSS-3</strain>
    </source>
</reference>
<sequence>MGATALRKVSIFGATGSIGQNTIDLIARDPDAYDVVALSGGANIAQLAADARRLRADVAVTAFPERLHDLRAALAGSGVEAAAGPAALVEAGARPADWVMSAIVGAAGLAPGLAALKQGATLALANKETLVCAGALVLETARRHGARLLPVDSEHSAVFQALVGEDMEAVERIVITASGGAFRDWPLERLASATAEQAAQHPNWDMGQRITIDSASMFNKALEVIETREFFGIDPDRIEVIVHPESMVHALVGFRDGALMAHLGAPDMRHAIGYALHWPERRDLPVARLDLAALGQLNFRAPDDARYPALRLARWVMARGGLSGAVFNAAKERALDHFIAGRIGFLDMAGLVEAVLDRFEADPGLIDAPMTLDTVTQTDHLARQRVDAAMAKRAG</sequence>
<accession>Q5LSU9</accession>
<dbReference type="EC" id="1.1.1.267" evidence="1"/>
<dbReference type="EMBL" id="CP000031">
    <property type="protein sequence ID" value="AAV94952.1"/>
    <property type="molecule type" value="Genomic_DNA"/>
</dbReference>
<dbReference type="SMR" id="Q5LSU9"/>
<dbReference type="STRING" id="246200.SPO1667"/>
<dbReference type="PaxDb" id="246200-SPO1667"/>
<dbReference type="KEGG" id="sil:SPO1667"/>
<dbReference type="eggNOG" id="COG0743">
    <property type="taxonomic scope" value="Bacteria"/>
</dbReference>
<dbReference type="HOGENOM" id="CLU_035714_4_0_5"/>
<dbReference type="UniPathway" id="UPA00056">
    <property type="reaction ID" value="UER00092"/>
</dbReference>
<dbReference type="Proteomes" id="UP000001023">
    <property type="component" value="Chromosome"/>
</dbReference>
<dbReference type="GO" id="GO:0030604">
    <property type="term" value="F:1-deoxy-D-xylulose-5-phosphate reductoisomerase activity"/>
    <property type="evidence" value="ECO:0007669"/>
    <property type="project" value="UniProtKB-UniRule"/>
</dbReference>
<dbReference type="GO" id="GO:0030145">
    <property type="term" value="F:manganese ion binding"/>
    <property type="evidence" value="ECO:0007669"/>
    <property type="project" value="TreeGrafter"/>
</dbReference>
<dbReference type="GO" id="GO:0070402">
    <property type="term" value="F:NADPH binding"/>
    <property type="evidence" value="ECO:0007669"/>
    <property type="project" value="InterPro"/>
</dbReference>
<dbReference type="GO" id="GO:0051484">
    <property type="term" value="P:isopentenyl diphosphate biosynthetic process, methylerythritol 4-phosphate pathway involved in terpenoid biosynthetic process"/>
    <property type="evidence" value="ECO:0007669"/>
    <property type="project" value="TreeGrafter"/>
</dbReference>
<dbReference type="FunFam" id="3.40.50.720:FF:000045">
    <property type="entry name" value="1-deoxy-D-xylulose 5-phosphate reductoisomerase"/>
    <property type="match status" value="1"/>
</dbReference>
<dbReference type="Gene3D" id="1.10.1740.10">
    <property type="match status" value="1"/>
</dbReference>
<dbReference type="Gene3D" id="3.40.50.720">
    <property type="entry name" value="NAD(P)-binding Rossmann-like Domain"/>
    <property type="match status" value="1"/>
</dbReference>
<dbReference type="HAMAP" id="MF_00183">
    <property type="entry name" value="DXP_reductoisom"/>
    <property type="match status" value="1"/>
</dbReference>
<dbReference type="InterPro" id="IPR003821">
    <property type="entry name" value="DXP_reductoisomerase"/>
</dbReference>
<dbReference type="InterPro" id="IPR013644">
    <property type="entry name" value="DXP_reductoisomerase_C"/>
</dbReference>
<dbReference type="InterPro" id="IPR013512">
    <property type="entry name" value="DXP_reductoisomerase_N"/>
</dbReference>
<dbReference type="InterPro" id="IPR026877">
    <property type="entry name" value="DXPR_C"/>
</dbReference>
<dbReference type="InterPro" id="IPR036169">
    <property type="entry name" value="DXPR_C_sf"/>
</dbReference>
<dbReference type="InterPro" id="IPR036291">
    <property type="entry name" value="NAD(P)-bd_dom_sf"/>
</dbReference>
<dbReference type="NCBIfam" id="TIGR00243">
    <property type="entry name" value="Dxr"/>
    <property type="match status" value="1"/>
</dbReference>
<dbReference type="PANTHER" id="PTHR30525">
    <property type="entry name" value="1-DEOXY-D-XYLULOSE 5-PHOSPHATE REDUCTOISOMERASE"/>
    <property type="match status" value="1"/>
</dbReference>
<dbReference type="PANTHER" id="PTHR30525:SF0">
    <property type="entry name" value="1-DEOXY-D-XYLULOSE 5-PHOSPHATE REDUCTOISOMERASE, CHLOROPLASTIC"/>
    <property type="match status" value="1"/>
</dbReference>
<dbReference type="Pfam" id="PF08436">
    <property type="entry name" value="DXP_redisom_C"/>
    <property type="match status" value="1"/>
</dbReference>
<dbReference type="Pfam" id="PF02670">
    <property type="entry name" value="DXP_reductoisom"/>
    <property type="match status" value="1"/>
</dbReference>
<dbReference type="Pfam" id="PF13288">
    <property type="entry name" value="DXPR_C"/>
    <property type="match status" value="1"/>
</dbReference>
<dbReference type="PIRSF" id="PIRSF006205">
    <property type="entry name" value="Dxp_reductismrs"/>
    <property type="match status" value="1"/>
</dbReference>
<dbReference type="SUPFAM" id="SSF69055">
    <property type="entry name" value="1-deoxy-D-xylulose-5-phosphate reductoisomerase, C-terminal domain"/>
    <property type="match status" value="1"/>
</dbReference>
<dbReference type="SUPFAM" id="SSF55347">
    <property type="entry name" value="Glyceraldehyde-3-phosphate dehydrogenase-like, C-terminal domain"/>
    <property type="match status" value="1"/>
</dbReference>
<dbReference type="SUPFAM" id="SSF51735">
    <property type="entry name" value="NAD(P)-binding Rossmann-fold domains"/>
    <property type="match status" value="1"/>
</dbReference>
<proteinExistence type="inferred from homology"/>
<organism>
    <name type="scientific">Ruegeria pomeroyi (strain ATCC 700808 / DSM 15171 / DSS-3)</name>
    <name type="common">Silicibacter pomeroyi</name>
    <dbReference type="NCBI Taxonomy" id="246200"/>
    <lineage>
        <taxon>Bacteria</taxon>
        <taxon>Pseudomonadati</taxon>
        <taxon>Pseudomonadota</taxon>
        <taxon>Alphaproteobacteria</taxon>
        <taxon>Rhodobacterales</taxon>
        <taxon>Roseobacteraceae</taxon>
        <taxon>Ruegeria</taxon>
    </lineage>
</organism>
<keyword id="KW-0414">Isoprene biosynthesis</keyword>
<keyword id="KW-0464">Manganese</keyword>
<keyword id="KW-0479">Metal-binding</keyword>
<keyword id="KW-0521">NADP</keyword>
<keyword id="KW-0560">Oxidoreductase</keyword>
<keyword id="KW-1185">Reference proteome</keyword>